<dbReference type="EC" id="6.5.1.8" evidence="1"/>
<dbReference type="EMBL" id="DS548514">
    <property type="protein sequence ID" value="EDR28341.1"/>
    <property type="molecule type" value="Genomic_DNA"/>
</dbReference>
<dbReference type="RefSeq" id="XP_001735457.1">
    <property type="nucleotide sequence ID" value="XM_001735405.1"/>
</dbReference>
<dbReference type="SMR" id="B0EAV2"/>
<dbReference type="EnsemblProtists" id="EDR28341">
    <property type="protein sequence ID" value="EDR28341"/>
    <property type="gene ID" value="EDI_022970"/>
</dbReference>
<dbReference type="GeneID" id="5880414"/>
<dbReference type="KEGG" id="edi:EDI_022970"/>
<dbReference type="VEuPathDB" id="AmoebaDB:EDI_022970"/>
<dbReference type="eggNOG" id="KOG3833">
    <property type="taxonomic scope" value="Eukaryota"/>
</dbReference>
<dbReference type="OMA" id="TRGECCR"/>
<dbReference type="OrthoDB" id="10249697at2759"/>
<dbReference type="Proteomes" id="UP000008076">
    <property type="component" value="Unassembled WGS sequence"/>
</dbReference>
<dbReference type="GO" id="GO:0005634">
    <property type="term" value="C:nucleus"/>
    <property type="evidence" value="ECO:0007669"/>
    <property type="project" value="TreeGrafter"/>
</dbReference>
<dbReference type="GO" id="GO:0072669">
    <property type="term" value="C:tRNA-splicing ligase complex"/>
    <property type="evidence" value="ECO:0007669"/>
    <property type="project" value="UniProtKB-UniRule"/>
</dbReference>
<dbReference type="GO" id="GO:0005525">
    <property type="term" value="F:GTP binding"/>
    <property type="evidence" value="ECO:0007669"/>
    <property type="project" value="UniProtKB-KW"/>
</dbReference>
<dbReference type="GO" id="GO:0046872">
    <property type="term" value="F:metal ion binding"/>
    <property type="evidence" value="ECO:0007669"/>
    <property type="project" value="UniProtKB-KW"/>
</dbReference>
<dbReference type="GO" id="GO:0003972">
    <property type="term" value="F:RNA ligase (ATP) activity"/>
    <property type="evidence" value="ECO:0007669"/>
    <property type="project" value="TreeGrafter"/>
</dbReference>
<dbReference type="GO" id="GO:0170057">
    <property type="term" value="F:RNA ligase (GTP) activity"/>
    <property type="evidence" value="ECO:0007669"/>
    <property type="project" value="UniProtKB-EC"/>
</dbReference>
<dbReference type="GO" id="GO:0006388">
    <property type="term" value="P:tRNA splicing, via endonucleolytic cleavage and ligation"/>
    <property type="evidence" value="ECO:0007669"/>
    <property type="project" value="UniProtKB-UniRule"/>
</dbReference>
<dbReference type="FunFam" id="3.90.1860.10:FF:000001">
    <property type="entry name" value="tRNA-splicing ligase RtcB homolog"/>
    <property type="match status" value="1"/>
</dbReference>
<dbReference type="Gene3D" id="3.90.1860.10">
    <property type="entry name" value="tRNA-splicing ligase RtcB"/>
    <property type="match status" value="1"/>
</dbReference>
<dbReference type="HAMAP" id="MF_03144">
    <property type="entry name" value="RtcB_euk"/>
    <property type="match status" value="1"/>
</dbReference>
<dbReference type="InterPro" id="IPR001233">
    <property type="entry name" value="RtcB"/>
</dbReference>
<dbReference type="InterPro" id="IPR036025">
    <property type="entry name" value="RtcB-like_sf"/>
</dbReference>
<dbReference type="InterPro" id="IPR027513">
    <property type="entry name" value="RtcB_euk"/>
</dbReference>
<dbReference type="PANTHER" id="PTHR11118">
    <property type="entry name" value="RNA-SPLICING LIGASE RTCB HOMOLOG"/>
    <property type="match status" value="1"/>
</dbReference>
<dbReference type="PANTHER" id="PTHR11118:SF1">
    <property type="entry name" value="RNA-SPLICING LIGASE RTCB HOMOLOG"/>
    <property type="match status" value="1"/>
</dbReference>
<dbReference type="Pfam" id="PF01139">
    <property type="entry name" value="RtcB"/>
    <property type="match status" value="1"/>
</dbReference>
<dbReference type="SUPFAM" id="SSF103365">
    <property type="entry name" value="Hypothetical protein PH1602"/>
    <property type="match status" value="1"/>
</dbReference>
<keyword id="KW-0342">GTP-binding</keyword>
<keyword id="KW-0436">Ligase</keyword>
<keyword id="KW-0464">Manganese</keyword>
<keyword id="KW-0479">Metal-binding</keyword>
<keyword id="KW-0547">Nucleotide-binding</keyword>
<keyword id="KW-0819">tRNA processing</keyword>
<proteinExistence type="inferred from homology"/>
<accession>B0EAV2</accession>
<evidence type="ECO:0000255" key="1">
    <source>
        <dbReference type="HAMAP-Rule" id="MF_03144"/>
    </source>
</evidence>
<evidence type="ECO:0000256" key="2">
    <source>
        <dbReference type="SAM" id="MobiDB-lite"/>
    </source>
</evidence>
<comment type="function">
    <text evidence="1">Catalytic subunit of the tRNA-splicing ligase complex that acts by directly joining spliced tRNA halves to mature-sized tRNAs by incorporating the precursor-derived splice junction phosphate into the mature tRNA as a canonical 3',5'-phosphodiester. May act as an RNA ligase with broad substrate specificity, and may function toward other RNAs.</text>
</comment>
<comment type="catalytic activity">
    <reaction evidence="1">
        <text>a 3'-end 3'-phospho-ribonucleotide-RNA + a 5'-end dephospho-ribonucleoside-RNA + GTP = a ribonucleotidyl-ribonucleotide-RNA + GMP + diphosphate</text>
        <dbReference type="Rhea" id="RHEA:68076"/>
        <dbReference type="Rhea" id="RHEA-COMP:10463"/>
        <dbReference type="Rhea" id="RHEA-COMP:13936"/>
        <dbReference type="Rhea" id="RHEA-COMP:17355"/>
        <dbReference type="ChEBI" id="CHEBI:33019"/>
        <dbReference type="ChEBI" id="CHEBI:37565"/>
        <dbReference type="ChEBI" id="CHEBI:58115"/>
        <dbReference type="ChEBI" id="CHEBI:83062"/>
        <dbReference type="ChEBI" id="CHEBI:138284"/>
        <dbReference type="ChEBI" id="CHEBI:173118"/>
        <dbReference type="EC" id="6.5.1.8"/>
    </reaction>
</comment>
<comment type="catalytic activity">
    <reaction evidence="1">
        <text>a 3'-end 2',3'-cyclophospho-ribonucleotide-RNA + a 5'-end dephospho-ribonucleoside-RNA + GTP + H2O = a ribonucleotidyl-ribonucleotide-RNA + GMP + diphosphate + H(+)</text>
        <dbReference type="Rhea" id="RHEA:68080"/>
        <dbReference type="Rhea" id="RHEA-COMP:10464"/>
        <dbReference type="Rhea" id="RHEA-COMP:13936"/>
        <dbReference type="Rhea" id="RHEA-COMP:17355"/>
        <dbReference type="ChEBI" id="CHEBI:15377"/>
        <dbReference type="ChEBI" id="CHEBI:15378"/>
        <dbReference type="ChEBI" id="CHEBI:33019"/>
        <dbReference type="ChEBI" id="CHEBI:37565"/>
        <dbReference type="ChEBI" id="CHEBI:58115"/>
        <dbReference type="ChEBI" id="CHEBI:83064"/>
        <dbReference type="ChEBI" id="CHEBI:138284"/>
        <dbReference type="ChEBI" id="CHEBI:173118"/>
        <dbReference type="EC" id="6.5.1.8"/>
    </reaction>
</comment>
<comment type="cofactor">
    <cofactor evidence="1">
        <name>Mn(2+)</name>
        <dbReference type="ChEBI" id="CHEBI:29035"/>
    </cofactor>
    <text evidence="1">Binds 2 manganese ions per subunit.</text>
</comment>
<comment type="subunit">
    <text evidence="1">Catalytic component of the tRNA-splicing ligase complex.</text>
</comment>
<comment type="miscellaneous">
    <text evidence="1">Ligation probably proceeds through 3 nucleotidyl transfer steps, with 2',3'-cyclic phosphate termini being hydrolyzed to 3'-P termini in a step that precedes 3'-P activation with GMP. In the first nucleotidyl transfer step, RTCB reacts with GTP to form a covalent RTCB-histidine-GMP intermediate with release of PPi; in the second step, the GMP moiety is transferred to the RNA 3'-P; in the third step, the 5'-OH from the opposite RNA strand attacks the activated 3'-P to form a 3',5'-phosphodiester bond and release GMP.</text>
</comment>
<comment type="similarity">
    <text evidence="1">Belongs to the RtcB family.</text>
</comment>
<feature type="chain" id="PRO_0000407229" description="RNA-splicing ligase RtcB homolog 1">
    <location>
        <begin position="1"/>
        <end position="535"/>
    </location>
</feature>
<feature type="region of interest" description="Disordered" evidence="2">
    <location>
        <begin position="1"/>
        <end position="29"/>
    </location>
</feature>
<feature type="compositionally biased region" description="Basic residues" evidence="2">
    <location>
        <begin position="1"/>
        <end position="16"/>
    </location>
</feature>
<feature type="active site" description="GMP-histidine intermediate" evidence="1">
    <location>
        <position position="458"/>
    </location>
</feature>
<feature type="binding site" evidence="1">
    <location>
        <position position="152"/>
    </location>
    <ligand>
        <name>Mn(2+)</name>
        <dbReference type="ChEBI" id="CHEBI:29035"/>
        <label>1</label>
    </ligand>
</feature>
<feature type="binding site" evidence="1">
    <location>
        <position position="155"/>
    </location>
    <ligand>
        <name>Mn(2+)</name>
        <dbReference type="ChEBI" id="CHEBI:29035"/>
        <label>1</label>
    </ligand>
</feature>
<feature type="binding site" evidence="1">
    <location>
        <position position="155"/>
    </location>
    <ligand>
        <name>Mn(2+)</name>
        <dbReference type="ChEBI" id="CHEBI:29035"/>
        <label>2</label>
    </ligand>
</feature>
<feature type="binding site" evidence="1">
    <location>
        <begin position="259"/>
        <end position="263"/>
    </location>
    <ligand>
        <name>GMP</name>
        <dbReference type="ChEBI" id="CHEBI:58115"/>
    </ligand>
</feature>
<feature type="binding site" evidence="1">
    <location>
        <position position="260"/>
    </location>
    <ligand>
        <name>Mn(2+)</name>
        <dbReference type="ChEBI" id="CHEBI:29035"/>
        <label>1</label>
    </ligand>
</feature>
<feature type="binding site" evidence="1">
    <location>
        <position position="292"/>
    </location>
    <ligand>
        <name>Mn(2+)</name>
        <dbReference type="ChEBI" id="CHEBI:29035"/>
        <label>2</label>
    </ligand>
</feature>
<feature type="binding site" evidence="1">
    <location>
        <begin position="383"/>
        <end position="384"/>
    </location>
    <ligand>
        <name>GMP</name>
        <dbReference type="ChEBI" id="CHEBI:58115"/>
    </ligand>
</feature>
<feature type="binding site" evidence="1">
    <location>
        <position position="383"/>
    </location>
    <ligand>
        <name>Mn(2+)</name>
        <dbReference type="ChEBI" id="CHEBI:29035"/>
        <label>2</label>
    </ligand>
</feature>
<feature type="binding site" evidence="1">
    <location>
        <begin position="432"/>
        <end position="435"/>
    </location>
    <ligand>
        <name>GMP</name>
        <dbReference type="ChEBI" id="CHEBI:58115"/>
    </ligand>
</feature>
<feature type="binding site" evidence="1">
    <location>
        <position position="439"/>
    </location>
    <ligand>
        <name>GMP</name>
        <dbReference type="ChEBI" id="CHEBI:58115"/>
    </ligand>
</feature>
<feature type="binding site" evidence="1">
    <location>
        <begin position="458"/>
        <end position="461"/>
    </location>
    <ligand>
        <name>GMP</name>
        <dbReference type="ChEBI" id="CHEBI:58115"/>
    </ligand>
</feature>
<feature type="binding site" evidence="1">
    <location>
        <position position="534"/>
    </location>
    <ligand>
        <name>GMP</name>
        <dbReference type="ChEBI" id="CHEBI:58115"/>
    </ligand>
</feature>
<reference key="1">
    <citation type="submission" date="2007-12" db="EMBL/GenBank/DDBJ databases">
        <title>Annotation of Entamoeba dispar SAW760.</title>
        <authorList>
            <person name="Lorenzi H."/>
            <person name="Inman J."/>
            <person name="Schobel S."/>
            <person name="Amedeo P."/>
            <person name="Caler E."/>
        </authorList>
    </citation>
    <scope>NUCLEOTIDE SEQUENCE [LARGE SCALE GENOMIC DNA]</scope>
    <source>
        <strain>ATCC PRA-260 / SAW760</strain>
    </source>
</reference>
<protein>
    <recommendedName>
        <fullName evidence="1">RNA-splicing ligase RtcB homolog 1</fullName>
        <ecNumber evidence="1">6.5.1.8</ecNumber>
    </recommendedName>
    <alternativeName>
        <fullName evidence="1">3'-phosphate/5'-hydroxy nucleic acid ligase 1</fullName>
    </alternativeName>
</protein>
<organism>
    <name type="scientific">Entamoeba dispar (strain ATCC PRA-260 / SAW760)</name>
    <dbReference type="NCBI Taxonomy" id="370354"/>
    <lineage>
        <taxon>Eukaryota</taxon>
        <taxon>Amoebozoa</taxon>
        <taxon>Evosea</taxon>
        <taxon>Archamoebae</taxon>
        <taxon>Mastigamoebida</taxon>
        <taxon>Entamoebidae</taxon>
        <taxon>Entamoeba</taxon>
    </lineage>
</organism>
<name>RTCB1_ENTDS</name>
<sequence length="535" mass="59033">MAKSRYSRKNKGKKLQRVQENTVSTEEKSVPEVETIDFNGFQIPKVYDGKLERKPMELEIKKGFVEGMNGDAKIFCNDDLFNLLTFEMIKDISNNYPSCVRQTANAATLPGVVASLAMPDAHSGYGFSIGGVVAMRLDNSEAVICPGGVGFDINCGVRLIRTNLQREDIEQHKSRLADELFKQIPSGVGTKAQIAFSPEDFDSIMTEGLEFLVKNGYAWEEDLSHCEEHGKIANADPSLVSKSAKSRGYKQVGTLGSGNHYLEVQVVDEIMDVEAAKAMGINEVGQVCIMVHCGSRGLGHQVCQDYIDLCMKSGICNPIDKQLTGVPFNSPIGQQYYSAMNCCANFAFANRGMITYRIRQAFETVLRMKPKKMDMHLVYDVCHNIAKVEEHEVDNKKVQCIVHRKGATRAFPPQHPDISEDYKEIGQPAIIGGSMGTCSYVLVGTQEGMKKSFGSTCHGAGRKMSRVKAMDNLTSKDVINRIKEMGIELRITDPKLAAEEADEAYKDVTEVVETCQAAGISKIVLRLKPLIVIKG</sequence>
<gene>
    <name type="ORF">EDI_022970</name>
</gene>